<name>PLSB_SALG2</name>
<gene>
    <name evidence="1" type="primary">plsB</name>
    <name type="ordered locus">SG4078</name>
</gene>
<proteinExistence type="inferred from homology"/>
<reference key="1">
    <citation type="journal article" date="2008" name="Genome Res.">
        <title>Comparative genome analysis of Salmonella enteritidis PT4 and Salmonella gallinarum 287/91 provides insights into evolutionary and host adaptation pathways.</title>
        <authorList>
            <person name="Thomson N.R."/>
            <person name="Clayton D.J."/>
            <person name="Windhorst D."/>
            <person name="Vernikos G."/>
            <person name="Davidson S."/>
            <person name="Churcher C."/>
            <person name="Quail M.A."/>
            <person name="Stevens M."/>
            <person name="Jones M.A."/>
            <person name="Watson M."/>
            <person name="Barron A."/>
            <person name="Layton A."/>
            <person name="Pickard D."/>
            <person name="Kingsley R.A."/>
            <person name="Bignell A."/>
            <person name="Clark L."/>
            <person name="Harris B."/>
            <person name="Ormond D."/>
            <person name="Abdellah Z."/>
            <person name="Brooks K."/>
            <person name="Cherevach I."/>
            <person name="Chillingworth T."/>
            <person name="Woodward J."/>
            <person name="Norberczak H."/>
            <person name="Lord A."/>
            <person name="Arrowsmith C."/>
            <person name="Jagels K."/>
            <person name="Moule S."/>
            <person name="Mungall K."/>
            <person name="Saunders M."/>
            <person name="Whitehead S."/>
            <person name="Chabalgoity J.A."/>
            <person name="Maskell D."/>
            <person name="Humphreys T."/>
            <person name="Roberts M."/>
            <person name="Barrow P.A."/>
            <person name="Dougan G."/>
            <person name="Parkhill J."/>
        </authorList>
    </citation>
    <scope>NUCLEOTIDE SEQUENCE [LARGE SCALE GENOMIC DNA]</scope>
    <source>
        <strain>287/91 / NCTC 13346</strain>
    </source>
</reference>
<protein>
    <recommendedName>
        <fullName evidence="1">Glycerol-3-phosphate acyltransferase</fullName>
        <shortName evidence="1">GPAT</shortName>
        <ecNumber evidence="1">2.3.1.15</ecNumber>
    </recommendedName>
</protein>
<feature type="chain" id="PRO_1000123092" description="Glycerol-3-phosphate acyltransferase">
    <location>
        <begin position="1"/>
        <end position="806"/>
    </location>
</feature>
<feature type="short sequence motif" description="HXXXXD motif">
    <location>
        <begin position="305"/>
        <end position="310"/>
    </location>
</feature>
<accession>B5R7T4</accession>
<comment type="catalytic activity">
    <reaction evidence="1">
        <text>sn-glycerol 3-phosphate + an acyl-CoA = a 1-acyl-sn-glycero-3-phosphate + CoA</text>
        <dbReference type="Rhea" id="RHEA:15325"/>
        <dbReference type="ChEBI" id="CHEBI:57287"/>
        <dbReference type="ChEBI" id="CHEBI:57597"/>
        <dbReference type="ChEBI" id="CHEBI:57970"/>
        <dbReference type="ChEBI" id="CHEBI:58342"/>
        <dbReference type="EC" id="2.3.1.15"/>
    </reaction>
</comment>
<comment type="pathway">
    <text evidence="1">Phospholipid metabolism; CDP-diacylglycerol biosynthesis; CDP-diacylglycerol from sn-glycerol 3-phosphate: step 1/3.</text>
</comment>
<comment type="subcellular location">
    <subcellularLocation>
        <location evidence="1">Cell inner membrane</location>
        <topology evidence="1">Peripheral membrane protein</topology>
        <orientation evidence="1">Cytoplasmic side</orientation>
    </subcellularLocation>
</comment>
<comment type="domain">
    <text evidence="1">The HXXXXD motif is essential for acyltransferase activity and may constitute the binding site for the phosphate moiety of the glycerol-3-phosphate.</text>
</comment>
<comment type="similarity">
    <text evidence="1">Belongs to the GPAT/DAPAT family.</text>
</comment>
<evidence type="ECO:0000255" key="1">
    <source>
        <dbReference type="HAMAP-Rule" id="MF_00393"/>
    </source>
</evidence>
<keyword id="KW-0012">Acyltransferase</keyword>
<keyword id="KW-0997">Cell inner membrane</keyword>
<keyword id="KW-1003">Cell membrane</keyword>
<keyword id="KW-0444">Lipid biosynthesis</keyword>
<keyword id="KW-0443">Lipid metabolism</keyword>
<keyword id="KW-0472">Membrane</keyword>
<keyword id="KW-0594">Phospholipid biosynthesis</keyword>
<keyword id="KW-1208">Phospholipid metabolism</keyword>
<keyword id="KW-0808">Transferase</keyword>
<organism>
    <name type="scientific">Salmonella gallinarum (strain 287/91 / NCTC 13346)</name>
    <dbReference type="NCBI Taxonomy" id="550538"/>
    <lineage>
        <taxon>Bacteria</taxon>
        <taxon>Pseudomonadati</taxon>
        <taxon>Pseudomonadota</taxon>
        <taxon>Gammaproteobacteria</taxon>
        <taxon>Enterobacterales</taxon>
        <taxon>Enterobacteriaceae</taxon>
        <taxon>Salmonella</taxon>
    </lineage>
</organism>
<dbReference type="EC" id="2.3.1.15" evidence="1"/>
<dbReference type="EMBL" id="AM933173">
    <property type="protein sequence ID" value="CAR39847.1"/>
    <property type="molecule type" value="Genomic_DNA"/>
</dbReference>
<dbReference type="RefSeq" id="WP_000017360.1">
    <property type="nucleotide sequence ID" value="NC_011274.1"/>
</dbReference>
<dbReference type="SMR" id="B5R7T4"/>
<dbReference type="KEGG" id="seg:SG4078"/>
<dbReference type="HOGENOM" id="CLU_015407_0_0_6"/>
<dbReference type="UniPathway" id="UPA00557">
    <property type="reaction ID" value="UER00612"/>
</dbReference>
<dbReference type="Proteomes" id="UP000008321">
    <property type="component" value="Chromosome"/>
</dbReference>
<dbReference type="GO" id="GO:0005886">
    <property type="term" value="C:plasma membrane"/>
    <property type="evidence" value="ECO:0007669"/>
    <property type="project" value="UniProtKB-SubCell"/>
</dbReference>
<dbReference type="GO" id="GO:0004366">
    <property type="term" value="F:glycerol-3-phosphate O-acyltransferase activity"/>
    <property type="evidence" value="ECO:0007669"/>
    <property type="project" value="UniProtKB-UniRule"/>
</dbReference>
<dbReference type="GO" id="GO:0016024">
    <property type="term" value="P:CDP-diacylglycerol biosynthetic process"/>
    <property type="evidence" value="ECO:0007669"/>
    <property type="project" value="UniProtKB-UniRule"/>
</dbReference>
<dbReference type="GO" id="GO:0006631">
    <property type="term" value="P:fatty acid metabolic process"/>
    <property type="evidence" value="ECO:0007669"/>
    <property type="project" value="TreeGrafter"/>
</dbReference>
<dbReference type="CDD" id="cd07993">
    <property type="entry name" value="LPLAT_DHAPAT-like"/>
    <property type="match status" value="1"/>
</dbReference>
<dbReference type="HAMAP" id="MF_00393">
    <property type="entry name" value="Glyc3P_acyltrans"/>
    <property type="match status" value="1"/>
</dbReference>
<dbReference type="InterPro" id="IPR022284">
    <property type="entry name" value="GPAT/DHAPAT"/>
</dbReference>
<dbReference type="InterPro" id="IPR045520">
    <property type="entry name" value="GPAT/DHAPAT_C"/>
</dbReference>
<dbReference type="InterPro" id="IPR041728">
    <property type="entry name" value="GPAT/DHAPAT_LPLAT"/>
</dbReference>
<dbReference type="InterPro" id="IPR028354">
    <property type="entry name" value="GPAT_PlsB"/>
</dbReference>
<dbReference type="InterPro" id="IPR002123">
    <property type="entry name" value="Plipid/glycerol_acylTrfase"/>
</dbReference>
<dbReference type="NCBIfam" id="TIGR03703">
    <property type="entry name" value="plsB"/>
    <property type="match status" value="1"/>
</dbReference>
<dbReference type="NCBIfam" id="NF003441">
    <property type="entry name" value="PRK04974.1"/>
    <property type="match status" value="1"/>
</dbReference>
<dbReference type="PANTHER" id="PTHR12563:SF17">
    <property type="entry name" value="DIHYDROXYACETONE PHOSPHATE ACYLTRANSFERASE"/>
    <property type="match status" value="1"/>
</dbReference>
<dbReference type="PANTHER" id="PTHR12563">
    <property type="entry name" value="GLYCEROL-3-PHOSPHATE ACYLTRANSFERASE"/>
    <property type="match status" value="1"/>
</dbReference>
<dbReference type="Pfam" id="PF01553">
    <property type="entry name" value="Acyltransferase"/>
    <property type="match status" value="1"/>
</dbReference>
<dbReference type="Pfam" id="PF19277">
    <property type="entry name" value="GPAT_C"/>
    <property type="match status" value="1"/>
</dbReference>
<dbReference type="PIRSF" id="PIRSF500064">
    <property type="entry name" value="GPAT"/>
    <property type="match status" value="1"/>
</dbReference>
<dbReference type="PIRSF" id="PIRSF000437">
    <property type="entry name" value="GPAT_DHAPAT"/>
    <property type="match status" value="1"/>
</dbReference>
<dbReference type="SMART" id="SM00563">
    <property type="entry name" value="PlsC"/>
    <property type="match status" value="1"/>
</dbReference>
<dbReference type="SUPFAM" id="SSF69593">
    <property type="entry name" value="Glycerol-3-phosphate (1)-acyltransferase"/>
    <property type="match status" value="1"/>
</dbReference>
<sequence>MSGWPRIYYKLLNLPLSILVKSKSIPAEPAQELGLDTSRPIMYVLPYNSKADLLTLRAQCLAHDLPDPLEPLEIDGALLPRYVFIHGGPRVFTYYTPKEESVKLFHDYLDLHRSNPALDVQMVPVSVMFGRAPGREKGEDNPPLRMLNGVQKFFAISWLGRDSFVRFSPSVSLRRMADEHGTDKIIAQKLARVARMHFARQRLAAVGPRLPARQDLFNKLLASKAIARAVEDEARSKKISHEKAQQNAIALMEEIAANFSYEMIRLTDRILGFTWNRLYQGINVHNAERVRQLAHDGHEIVYVPCHRSHMDYLLLSYVLYHQGLVPPHIAAGINLNFWPAGPIFRRLGAFFIRRTFKGNKLYSTVFREYLGELFSRGYSVEYFVEGGRSRTGRLLDPKTGTLSMTIQAMLRGGTRPITLVPIYIGYEHVMEVGTYAKELRGATKEKESLPQMLKGLSKLRNLGQGYVNFGEPMPLMTYLNQHVPEWRESIDPIEAIRPAWLTPTVNSIAADLMVRINNAGAANAMNLCCTALLASRQRSLTREQLTEQLDCYLDLMRNVPYSTDSTVPAASAGELIAHALQMNKFEVEKDTIGDIIILPREQAVLMTYYRNNIAHMLIMPSLMAAIITQHRRISRDALQQHVEALYPMLKAELFLRWEREELASVIDALASEMQRQGLITLQDDELHINPTHSRTLQLLAAGARETLQRYAITFWLLSANPSINRSTLEKESRTVAQRLSVLHGINAPEFFDKAVFSSLVLTLRDEGYISDTGDAEPAETMKIYQMLADLITSDVRLTIESATQGE</sequence>